<sequence length="502" mass="59351">MIPPRIVPWRDFAELEELKLWFYPKSKGTIEDKRQRAVQRVQSYRLKGSQYLPHVVDSTAQITCAVLLDEKEACLGVHQDSIPIRLSYVMALIRFVNGLLDPTQQSQFAIPLHTLAAKIGLPSWFVDLRHWGTHERDLPGLEMLRWAANEALSWLYDHYWNDEELEDDRDDDDDDDDTGYGYRRNDKLEKYMESLTKTLDKWKRLRNEFLEYKWVWENANDSLITSSNFSGDNLVNYDAEKRKSSHASSSETMIRENLRQWQELWKLSIYHNVVLEKFFNNYDPLLLKVLMLNLNNFDWKVIEWVARNYRTQQDDSNITTILKRKFNAWKELQKRLLDVIINNLNNKNFKNKWQNWEKLIDENASYLILYFCQSMLAKLETEKITGNSWRNKKRRKQIDSTVEIEAKLKENIDNLSLRFNEGEIKLYDFIPAEKDSVPLKKEVSPALKADTNDILGDLASLKQRMSSFGTVGKKNKQEENRATPVKNWSRVQNWKPKPFGVL</sequence>
<comment type="function">
    <text evidence="3">Regulates cell surface growth, bud formation and morphogenesis. May act indirectly by regulating factor(s) involved in these processes.</text>
</comment>
<comment type="interaction">
    <interactant intactId="EBI-10053">
        <id>P36146</id>
    </interactant>
    <interactant intactId="EBI-3741923">
        <id>Q07845</id>
        <label>GRC3</label>
    </interactant>
    <organismsDiffer>false</organismsDiffer>
    <experiments>6</experiments>
</comment>
<comment type="subcellular location">
    <subcellularLocation>
        <location>Nucleus</location>
    </subcellularLocation>
    <subcellularLocation>
        <location>Mitochondrion</location>
    </subcellularLocation>
</comment>
<comment type="miscellaneous">
    <text evidence="2">Present with 647 molecules/cell in log phase SD medium.</text>
</comment>
<comment type="similarity">
    <text evidence="4">Belongs to the LAS1 family.</text>
</comment>
<dbReference type="EMBL" id="U09670">
    <property type="protein sequence ID" value="AAC49111.1"/>
    <property type="molecule type" value="Genomic_DNA"/>
</dbReference>
<dbReference type="EMBL" id="Z28288">
    <property type="protein sequence ID" value="CAA82142.1"/>
    <property type="molecule type" value="Genomic_DNA"/>
</dbReference>
<dbReference type="EMBL" id="AY723842">
    <property type="protein sequence ID" value="AAU09759.1"/>
    <property type="molecule type" value="Genomic_DNA"/>
</dbReference>
<dbReference type="EMBL" id="BK006944">
    <property type="protein sequence ID" value="DAA09214.1"/>
    <property type="molecule type" value="Genomic_DNA"/>
</dbReference>
<dbReference type="PIR" id="S38139">
    <property type="entry name" value="S38139"/>
</dbReference>
<dbReference type="RefSeq" id="NP_012989.3">
    <property type="nucleotide sequence ID" value="NM_001179853.3"/>
</dbReference>
<dbReference type="PDB" id="7Y18">
    <property type="method" value="X-ray"/>
    <property type="resolution" value="3.69 A"/>
    <property type="chains" value="C/D/F=1-502"/>
</dbReference>
<dbReference type="PDB" id="8J5Y">
    <property type="method" value="EM"/>
    <property type="resolution" value="3.07 A"/>
    <property type="chains" value="C/D=1-502"/>
</dbReference>
<dbReference type="PDBsum" id="7Y18"/>
<dbReference type="PDBsum" id="8J5Y"/>
<dbReference type="SMR" id="P36146"/>
<dbReference type="BioGRID" id="34194">
    <property type="interactions" value="252"/>
</dbReference>
<dbReference type="ComplexPortal" id="CPX-3384">
    <property type="entry name" value="LAS1 RNA processome complex"/>
</dbReference>
<dbReference type="DIP" id="DIP-6398N"/>
<dbReference type="FunCoup" id="P36146">
    <property type="interactions" value="117"/>
</dbReference>
<dbReference type="IntAct" id="P36146">
    <property type="interactions" value="10"/>
</dbReference>
<dbReference type="STRING" id="4932.YKR063C"/>
<dbReference type="iPTMnet" id="P36146"/>
<dbReference type="PaxDb" id="4932-YKR063C"/>
<dbReference type="PeptideAtlas" id="P36146"/>
<dbReference type="EnsemblFungi" id="YKR063C_mRNA">
    <property type="protein sequence ID" value="YKR063C"/>
    <property type="gene ID" value="YKR063C"/>
</dbReference>
<dbReference type="GeneID" id="853937"/>
<dbReference type="KEGG" id="sce:YKR063C"/>
<dbReference type="AGR" id="SGD:S000001771"/>
<dbReference type="SGD" id="S000001771">
    <property type="gene designation" value="LAS1"/>
</dbReference>
<dbReference type="VEuPathDB" id="FungiDB:YKR063C"/>
<dbReference type="eggNOG" id="KOG2425">
    <property type="taxonomic scope" value="Eukaryota"/>
</dbReference>
<dbReference type="GeneTree" id="ENSGT00390000014785"/>
<dbReference type="HOGENOM" id="CLU_043823_0_0_1"/>
<dbReference type="InParanoid" id="P36146"/>
<dbReference type="OMA" id="HWGTHER"/>
<dbReference type="OrthoDB" id="10263222at2759"/>
<dbReference type="BioCyc" id="YEAST:G3O-32031-MONOMER"/>
<dbReference type="Reactome" id="R-SCE-6791226">
    <property type="pathway name" value="Major pathway of rRNA processing in the nucleolus and cytosol"/>
</dbReference>
<dbReference type="BioGRID-ORCS" id="853937">
    <property type="hits" value="7 hits in 10 CRISPR screens"/>
</dbReference>
<dbReference type="PRO" id="PR:P36146"/>
<dbReference type="Proteomes" id="UP000002311">
    <property type="component" value="Chromosome XI"/>
</dbReference>
<dbReference type="RNAct" id="P36146">
    <property type="molecule type" value="protein"/>
</dbReference>
<dbReference type="GO" id="GO:0005737">
    <property type="term" value="C:cytoplasm"/>
    <property type="evidence" value="ECO:0000314"/>
    <property type="project" value="SGD"/>
</dbReference>
<dbReference type="GO" id="GO:0090730">
    <property type="term" value="C:Las1 complex"/>
    <property type="evidence" value="ECO:0000353"/>
    <property type="project" value="ComplexPortal"/>
</dbReference>
<dbReference type="GO" id="GO:0005739">
    <property type="term" value="C:mitochondrion"/>
    <property type="evidence" value="ECO:0007005"/>
    <property type="project" value="SGD"/>
</dbReference>
<dbReference type="GO" id="GO:0005730">
    <property type="term" value="C:nucleolus"/>
    <property type="evidence" value="ECO:0000314"/>
    <property type="project" value="SGD"/>
</dbReference>
<dbReference type="GO" id="GO:0005634">
    <property type="term" value="C:nucleus"/>
    <property type="evidence" value="ECO:0000314"/>
    <property type="project" value="SGD"/>
</dbReference>
<dbReference type="GO" id="GO:0030687">
    <property type="term" value="C:preribosome, large subunit precursor"/>
    <property type="evidence" value="ECO:0000353"/>
    <property type="project" value="SGD"/>
</dbReference>
<dbReference type="GO" id="GO:0004519">
    <property type="term" value="F:endonuclease activity"/>
    <property type="evidence" value="ECO:0000314"/>
    <property type="project" value="SGD"/>
</dbReference>
<dbReference type="GO" id="GO:0000448">
    <property type="term" value="P:cleavage in ITS2 between 5.8S rRNA and LSU-rRNA of tricistronic rRNA transcript (SSU-rRNA, 5.8S rRNA, LSU-rRNA)"/>
    <property type="evidence" value="ECO:0000314"/>
    <property type="project" value="SGD"/>
</dbReference>
<dbReference type="GO" id="GO:0000460">
    <property type="term" value="P:maturation of 5.8S rRNA"/>
    <property type="evidence" value="ECO:0000315"/>
    <property type="project" value="SGD"/>
</dbReference>
<dbReference type="GO" id="GO:0000470">
    <property type="term" value="P:maturation of LSU-rRNA"/>
    <property type="evidence" value="ECO:0000315"/>
    <property type="project" value="SGD"/>
</dbReference>
<dbReference type="InterPro" id="IPR007174">
    <property type="entry name" value="Las1"/>
</dbReference>
<dbReference type="PANTHER" id="PTHR15002">
    <property type="entry name" value="RIBOSOMAL BIOGENESIS PROTEIN LAS1L"/>
    <property type="match status" value="1"/>
</dbReference>
<dbReference type="PANTHER" id="PTHR15002:SF0">
    <property type="entry name" value="RIBOSOMAL BIOGENESIS PROTEIN LAS1L"/>
    <property type="match status" value="1"/>
</dbReference>
<dbReference type="Pfam" id="PF04031">
    <property type="entry name" value="Las1"/>
    <property type="match status" value="1"/>
</dbReference>
<name>LAS1_YEAST</name>
<proteinExistence type="evidence at protein level"/>
<accession>P36146</accession>
<accession>D6VXC4</accession>
<accession>Q66R55</accession>
<feature type="chain" id="PRO_0000211561" description="Protein LAS1">
    <location>
        <begin position="1"/>
        <end position="502"/>
    </location>
</feature>
<feature type="region of interest" description="Disordered" evidence="1">
    <location>
        <begin position="469"/>
        <end position="489"/>
    </location>
</feature>
<feature type="sequence conflict" description="In Ref. 4; AAU09759." evidence="4" ref="4">
    <original>N</original>
    <variation>D</variation>
    <location>
        <position position="97"/>
    </location>
</feature>
<evidence type="ECO:0000256" key="1">
    <source>
        <dbReference type="SAM" id="MobiDB-lite"/>
    </source>
</evidence>
<evidence type="ECO:0000269" key="2">
    <source>
    </source>
</evidence>
<evidence type="ECO:0000269" key="3">
    <source>
    </source>
</evidence>
<evidence type="ECO:0000305" key="4"/>
<keyword id="KW-0002">3D-structure</keyword>
<keyword id="KW-0496">Mitochondrion</keyword>
<keyword id="KW-0539">Nucleus</keyword>
<keyword id="KW-1185">Reference proteome</keyword>
<gene>
    <name type="primary">LAS1</name>
    <name type="ordered locus">YKR063C</name>
</gene>
<organism>
    <name type="scientific">Saccharomyces cerevisiae (strain ATCC 204508 / S288c)</name>
    <name type="common">Baker's yeast</name>
    <dbReference type="NCBI Taxonomy" id="559292"/>
    <lineage>
        <taxon>Eukaryota</taxon>
        <taxon>Fungi</taxon>
        <taxon>Dikarya</taxon>
        <taxon>Ascomycota</taxon>
        <taxon>Saccharomycotina</taxon>
        <taxon>Saccharomycetes</taxon>
        <taxon>Saccharomycetales</taxon>
        <taxon>Saccharomycetaceae</taxon>
        <taxon>Saccharomyces</taxon>
    </lineage>
</organism>
<protein>
    <recommendedName>
        <fullName>Protein LAS1</fullName>
    </recommendedName>
</protein>
<reference key="1">
    <citation type="journal article" date="1995" name="Genetics">
        <title>LAS1 is an essential nuclear protein involved in cell morphogenesis and cell surface growth.</title>
        <authorList>
            <person name="Doseff A.I."/>
            <person name="Arndt K.T."/>
        </authorList>
    </citation>
    <scope>NUCLEOTIDE SEQUENCE [GENOMIC DNA]</scope>
    <scope>FUNCTION</scope>
    <scope>SUBCELLULAR LOCATION</scope>
    <source>
        <strain>S288c / GRFAT8</strain>
    </source>
</reference>
<reference key="2">
    <citation type="journal article" date="1994" name="Nature">
        <title>Complete DNA sequence of yeast chromosome XI.</title>
        <authorList>
            <person name="Dujon B."/>
            <person name="Alexandraki D."/>
            <person name="Andre B."/>
            <person name="Ansorge W."/>
            <person name="Baladron V."/>
            <person name="Ballesta J.P.G."/>
            <person name="Banrevi A."/>
            <person name="Bolle P.-A."/>
            <person name="Bolotin-Fukuhara M."/>
            <person name="Bossier P."/>
            <person name="Bou G."/>
            <person name="Boyer J."/>
            <person name="Buitrago M.J."/>
            <person name="Cheret G."/>
            <person name="Colleaux L."/>
            <person name="Daignan-Fornier B."/>
            <person name="del Rey F."/>
            <person name="Dion C."/>
            <person name="Domdey H."/>
            <person name="Duesterhoeft A."/>
            <person name="Duesterhus S."/>
            <person name="Entian K.-D."/>
            <person name="Erfle H."/>
            <person name="Esteban P.F."/>
            <person name="Feldmann H."/>
            <person name="Fernandes L."/>
            <person name="Fobo G.M."/>
            <person name="Fritz C."/>
            <person name="Fukuhara H."/>
            <person name="Gabel C."/>
            <person name="Gaillon L."/>
            <person name="Garcia-Cantalejo J.M."/>
            <person name="Garcia-Ramirez J.J."/>
            <person name="Gent M.E."/>
            <person name="Ghazvini M."/>
            <person name="Goffeau A."/>
            <person name="Gonzalez A."/>
            <person name="Grothues D."/>
            <person name="Guerreiro P."/>
            <person name="Hegemann J.H."/>
            <person name="Hewitt N."/>
            <person name="Hilger F."/>
            <person name="Hollenberg C.P."/>
            <person name="Horaitis O."/>
            <person name="Indge K.J."/>
            <person name="Jacquier A."/>
            <person name="James C.M."/>
            <person name="Jauniaux J.-C."/>
            <person name="Jimenez A."/>
            <person name="Keuchel H."/>
            <person name="Kirchrath L."/>
            <person name="Kleine K."/>
            <person name="Koetter P."/>
            <person name="Legrain P."/>
            <person name="Liebl S."/>
            <person name="Louis E.J."/>
            <person name="Maia e Silva A."/>
            <person name="Marck C."/>
            <person name="Monnier A.-L."/>
            <person name="Moestl D."/>
            <person name="Mueller S."/>
            <person name="Obermaier B."/>
            <person name="Oliver S.G."/>
            <person name="Pallier C."/>
            <person name="Pascolo S."/>
            <person name="Pfeiffer F."/>
            <person name="Philippsen P."/>
            <person name="Planta R.J."/>
            <person name="Pohl F.M."/>
            <person name="Pohl T.M."/>
            <person name="Poehlmann R."/>
            <person name="Portetelle D."/>
            <person name="Purnelle B."/>
            <person name="Puzos V."/>
            <person name="Ramezani Rad M."/>
            <person name="Rasmussen S.W."/>
            <person name="Remacha M.A."/>
            <person name="Revuelta J.L."/>
            <person name="Richard G.-F."/>
            <person name="Rieger M."/>
            <person name="Rodrigues-Pousada C."/>
            <person name="Rose M."/>
            <person name="Rupp T."/>
            <person name="Santos M.A."/>
            <person name="Schwager C."/>
            <person name="Sensen C."/>
            <person name="Skala J."/>
            <person name="Soares H."/>
            <person name="Sor F."/>
            <person name="Stegemann J."/>
            <person name="Tettelin H."/>
            <person name="Thierry A."/>
            <person name="Tzermia M."/>
            <person name="Urrestarazu L.A."/>
            <person name="van Dyck L."/>
            <person name="van Vliet-Reedijk J.C."/>
            <person name="Valens M."/>
            <person name="Vandenbol M."/>
            <person name="Vilela C."/>
            <person name="Vissers S."/>
            <person name="von Wettstein D."/>
            <person name="Voss H."/>
            <person name="Wiemann S."/>
            <person name="Xu G."/>
            <person name="Zimmermann J."/>
            <person name="Haasemann M."/>
            <person name="Becker I."/>
            <person name="Mewes H.-W."/>
        </authorList>
    </citation>
    <scope>NUCLEOTIDE SEQUENCE [LARGE SCALE GENOMIC DNA]</scope>
    <source>
        <strain>ATCC 204508 / S288c</strain>
    </source>
</reference>
<reference key="3">
    <citation type="journal article" date="2014" name="G3 (Bethesda)">
        <title>The reference genome sequence of Saccharomyces cerevisiae: Then and now.</title>
        <authorList>
            <person name="Engel S.R."/>
            <person name="Dietrich F.S."/>
            <person name="Fisk D.G."/>
            <person name="Binkley G."/>
            <person name="Balakrishnan R."/>
            <person name="Costanzo M.C."/>
            <person name="Dwight S.S."/>
            <person name="Hitz B.C."/>
            <person name="Karra K."/>
            <person name="Nash R.S."/>
            <person name="Weng S."/>
            <person name="Wong E.D."/>
            <person name="Lloyd P."/>
            <person name="Skrzypek M.S."/>
            <person name="Miyasato S.R."/>
            <person name="Simison M."/>
            <person name="Cherry J.M."/>
        </authorList>
    </citation>
    <scope>GENOME REANNOTATION</scope>
    <source>
        <strain>ATCC 204508 / S288c</strain>
    </source>
</reference>
<reference key="4">
    <citation type="journal article" date="2007" name="Genome Res.">
        <title>Approaching a complete repository of sequence-verified protein-encoding clones for Saccharomyces cerevisiae.</title>
        <authorList>
            <person name="Hu Y."/>
            <person name="Rolfs A."/>
            <person name="Bhullar B."/>
            <person name="Murthy T.V.S."/>
            <person name="Zhu C."/>
            <person name="Berger M.F."/>
            <person name="Camargo A.A."/>
            <person name="Kelley F."/>
            <person name="McCarron S."/>
            <person name="Jepson D."/>
            <person name="Richardson A."/>
            <person name="Raphael J."/>
            <person name="Moreira D."/>
            <person name="Taycher E."/>
            <person name="Zuo D."/>
            <person name="Mohr S."/>
            <person name="Kane M.F."/>
            <person name="Williamson J."/>
            <person name="Simpson A.J.G."/>
            <person name="Bulyk M.L."/>
            <person name="Harlow E."/>
            <person name="Marsischky G."/>
            <person name="Kolodner R.D."/>
            <person name="LaBaer J."/>
        </authorList>
    </citation>
    <scope>NUCLEOTIDE SEQUENCE [GENOMIC DNA]</scope>
    <source>
        <strain>ATCC 204508 / S288c</strain>
    </source>
</reference>
<reference key="5">
    <citation type="journal article" date="2003" name="Nature">
        <title>Global analysis of protein expression in yeast.</title>
        <authorList>
            <person name="Ghaemmaghami S."/>
            <person name="Huh W.-K."/>
            <person name="Bower K."/>
            <person name="Howson R.W."/>
            <person name="Belle A."/>
            <person name="Dephoure N."/>
            <person name="O'Shea E.K."/>
            <person name="Weissman J.S."/>
        </authorList>
    </citation>
    <scope>LEVEL OF PROTEIN EXPRESSION [LARGE SCALE ANALYSIS]</scope>
</reference>
<reference key="6">
    <citation type="journal article" date="2003" name="Proc. Natl. Acad. Sci. U.S.A.">
        <title>The proteome of Saccharomyces cerevisiae mitochondria.</title>
        <authorList>
            <person name="Sickmann A."/>
            <person name="Reinders J."/>
            <person name="Wagner Y."/>
            <person name="Joppich C."/>
            <person name="Zahedi R.P."/>
            <person name="Meyer H.E."/>
            <person name="Schoenfisch B."/>
            <person name="Perschil I."/>
            <person name="Chacinska A."/>
            <person name="Guiard B."/>
            <person name="Rehling P."/>
            <person name="Pfanner N."/>
            <person name="Meisinger C."/>
        </authorList>
    </citation>
    <scope>SUBCELLULAR LOCATION [LARGE SCALE ANALYSIS]</scope>
    <source>
        <strain>ATCC 76625 / YPH499</strain>
    </source>
</reference>
<reference key="7">
    <citation type="journal article" date="2008" name="Mol. Cell. Proteomics">
        <title>A multidimensional chromatography technology for in-depth phosphoproteome analysis.</title>
        <authorList>
            <person name="Albuquerque C.P."/>
            <person name="Smolka M.B."/>
            <person name="Payne S.H."/>
            <person name="Bafna V."/>
            <person name="Eng J."/>
            <person name="Zhou H."/>
        </authorList>
    </citation>
    <scope>IDENTIFICATION BY MASS SPECTROMETRY [LARGE SCALE ANALYSIS]</scope>
</reference>